<protein>
    <recommendedName>
        <fullName evidence="1">Large ribosomal subunit protein bL19</fullName>
    </recommendedName>
    <alternativeName>
        <fullName evidence="2">50S ribosomal protein L19</fullName>
    </alternativeName>
</protein>
<organism>
    <name type="scientific">Escherichia coli O81 (strain ED1a)</name>
    <dbReference type="NCBI Taxonomy" id="585397"/>
    <lineage>
        <taxon>Bacteria</taxon>
        <taxon>Pseudomonadati</taxon>
        <taxon>Pseudomonadota</taxon>
        <taxon>Gammaproteobacteria</taxon>
        <taxon>Enterobacterales</taxon>
        <taxon>Enterobacteriaceae</taxon>
        <taxon>Escherichia</taxon>
    </lineage>
</organism>
<sequence>MSNIIKQLEQEQMKQDVPSFRPGDTVEVKVWVVEGSKKRLQAFEGVVIAIRNRGLHSAFTVRKISNGEGVERVFQTHSPVVDSISVKRRGAVRKAKLYYLRERTGKAARIKERLN</sequence>
<proteinExistence type="inferred from homology"/>
<feature type="chain" id="PRO_1000193839" description="Large ribosomal subunit protein bL19">
    <location>
        <begin position="1"/>
        <end position="115"/>
    </location>
</feature>
<comment type="function">
    <text evidence="1">This protein is located at the 30S-50S ribosomal subunit interface and may play a role in the structure and function of the aminoacyl-tRNA binding site.</text>
</comment>
<comment type="similarity">
    <text evidence="1">Belongs to the bacterial ribosomal protein bL19 family.</text>
</comment>
<reference key="1">
    <citation type="journal article" date="2009" name="PLoS Genet.">
        <title>Organised genome dynamics in the Escherichia coli species results in highly diverse adaptive paths.</title>
        <authorList>
            <person name="Touchon M."/>
            <person name="Hoede C."/>
            <person name="Tenaillon O."/>
            <person name="Barbe V."/>
            <person name="Baeriswyl S."/>
            <person name="Bidet P."/>
            <person name="Bingen E."/>
            <person name="Bonacorsi S."/>
            <person name="Bouchier C."/>
            <person name="Bouvet O."/>
            <person name="Calteau A."/>
            <person name="Chiapello H."/>
            <person name="Clermont O."/>
            <person name="Cruveiller S."/>
            <person name="Danchin A."/>
            <person name="Diard M."/>
            <person name="Dossat C."/>
            <person name="Karoui M.E."/>
            <person name="Frapy E."/>
            <person name="Garry L."/>
            <person name="Ghigo J.M."/>
            <person name="Gilles A.M."/>
            <person name="Johnson J."/>
            <person name="Le Bouguenec C."/>
            <person name="Lescat M."/>
            <person name="Mangenot S."/>
            <person name="Martinez-Jehanne V."/>
            <person name="Matic I."/>
            <person name="Nassif X."/>
            <person name="Oztas S."/>
            <person name="Petit M.A."/>
            <person name="Pichon C."/>
            <person name="Rouy Z."/>
            <person name="Ruf C.S."/>
            <person name="Schneider D."/>
            <person name="Tourret J."/>
            <person name="Vacherie B."/>
            <person name="Vallenet D."/>
            <person name="Medigue C."/>
            <person name="Rocha E.P.C."/>
            <person name="Denamur E."/>
        </authorList>
    </citation>
    <scope>NUCLEOTIDE SEQUENCE [LARGE SCALE GENOMIC DNA]</scope>
    <source>
        <strain>ED1a</strain>
    </source>
</reference>
<name>RL19_ECO81</name>
<keyword id="KW-0687">Ribonucleoprotein</keyword>
<keyword id="KW-0689">Ribosomal protein</keyword>
<evidence type="ECO:0000255" key="1">
    <source>
        <dbReference type="HAMAP-Rule" id="MF_00402"/>
    </source>
</evidence>
<evidence type="ECO:0000305" key="2"/>
<gene>
    <name evidence="1" type="primary">rplS</name>
    <name type="ordered locus">ECED1_3045</name>
</gene>
<accession>B7MYP6</accession>
<dbReference type="EMBL" id="CU928162">
    <property type="protein sequence ID" value="CAR09212.2"/>
    <property type="molecule type" value="Genomic_DNA"/>
</dbReference>
<dbReference type="RefSeq" id="WP_000065253.1">
    <property type="nucleotide sequence ID" value="NC_011745.1"/>
</dbReference>
<dbReference type="SMR" id="B7MYP6"/>
<dbReference type="GeneID" id="93774456"/>
<dbReference type="KEGG" id="ecq:ECED1_3045"/>
<dbReference type="HOGENOM" id="CLU_103507_2_1_6"/>
<dbReference type="Proteomes" id="UP000000748">
    <property type="component" value="Chromosome"/>
</dbReference>
<dbReference type="GO" id="GO:0022625">
    <property type="term" value="C:cytosolic large ribosomal subunit"/>
    <property type="evidence" value="ECO:0007669"/>
    <property type="project" value="TreeGrafter"/>
</dbReference>
<dbReference type="GO" id="GO:0003735">
    <property type="term" value="F:structural constituent of ribosome"/>
    <property type="evidence" value="ECO:0007669"/>
    <property type="project" value="InterPro"/>
</dbReference>
<dbReference type="GO" id="GO:0006412">
    <property type="term" value="P:translation"/>
    <property type="evidence" value="ECO:0007669"/>
    <property type="project" value="UniProtKB-UniRule"/>
</dbReference>
<dbReference type="FunFam" id="2.30.30.790:FF:000001">
    <property type="entry name" value="50S ribosomal protein L19"/>
    <property type="match status" value="1"/>
</dbReference>
<dbReference type="Gene3D" id="2.30.30.790">
    <property type="match status" value="1"/>
</dbReference>
<dbReference type="HAMAP" id="MF_00402">
    <property type="entry name" value="Ribosomal_bL19"/>
    <property type="match status" value="1"/>
</dbReference>
<dbReference type="InterPro" id="IPR001857">
    <property type="entry name" value="Ribosomal_bL19"/>
</dbReference>
<dbReference type="InterPro" id="IPR018257">
    <property type="entry name" value="Ribosomal_bL19_CS"/>
</dbReference>
<dbReference type="InterPro" id="IPR038657">
    <property type="entry name" value="Ribosomal_bL19_sf"/>
</dbReference>
<dbReference type="InterPro" id="IPR008991">
    <property type="entry name" value="Translation_prot_SH3-like_sf"/>
</dbReference>
<dbReference type="NCBIfam" id="TIGR01024">
    <property type="entry name" value="rplS_bact"/>
    <property type="match status" value="1"/>
</dbReference>
<dbReference type="PANTHER" id="PTHR15680:SF9">
    <property type="entry name" value="LARGE RIBOSOMAL SUBUNIT PROTEIN BL19M"/>
    <property type="match status" value="1"/>
</dbReference>
<dbReference type="PANTHER" id="PTHR15680">
    <property type="entry name" value="RIBOSOMAL PROTEIN L19"/>
    <property type="match status" value="1"/>
</dbReference>
<dbReference type="Pfam" id="PF01245">
    <property type="entry name" value="Ribosomal_L19"/>
    <property type="match status" value="1"/>
</dbReference>
<dbReference type="PIRSF" id="PIRSF002191">
    <property type="entry name" value="Ribosomal_L19"/>
    <property type="match status" value="1"/>
</dbReference>
<dbReference type="PRINTS" id="PR00061">
    <property type="entry name" value="RIBOSOMALL19"/>
</dbReference>
<dbReference type="SUPFAM" id="SSF50104">
    <property type="entry name" value="Translation proteins SH3-like domain"/>
    <property type="match status" value="1"/>
</dbReference>
<dbReference type="PROSITE" id="PS01015">
    <property type="entry name" value="RIBOSOMAL_L19"/>
    <property type="match status" value="1"/>
</dbReference>